<sequence>MNVTIYDVAREASVSMATVSRVVNGNPNVKPSTRKKVLETIERLGYRPNAVARGLASKKTTTVGVIIPDISNIFYAELARGIEDIATMYKYNIILSNSDQNQDKELHLLNNMLGKQVDGIIFMSGNVTEEHVEELKKSPVPVVLAASIESTNQIPSVTIDYEQAAFDAVQSLIDSGHKNIAFVSGTLEEPINHAKKVKGYKRALTESGLPVRDSYIVEGDYTYDSGIEAVEKLLEEDEKPTAIFVGTDEMALGVIHGAQDRGLNVPNDLEIIGFDNTRLSTMVRPQLTSVVQPMYDIGAVAMRLLTKYMNKETVDSSIVQLPHRIEFRQSTK</sequence>
<feature type="chain" id="PRO_0000107924" description="Catabolite control protein A">
    <location>
        <begin position="1"/>
        <end position="332"/>
    </location>
</feature>
<feature type="domain" description="HTH lacI-type" evidence="2">
    <location>
        <begin position="1"/>
        <end position="57"/>
    </location>
</feature>
<feature type="DNA-binding region" description="H-T-H motif" evidence="2">
    <location>
        <begin position="5"/>
        <end position="24"/>
    </location>
</feature>
<feature type="helix" evidence="4">
    <location>
        <begin position="5"/>
        <end position="11"/>
    </location>
</feature>
<feature type="helix" evidence="4">
    <location>
        <begin position="16"/>
        <end position="23"/>
    </location>
</feature>
<feature type="helix" evidence="4">
    <location>
        <begin position="31"/>
        <end position="44"/>
    </location>
</feature>
<feature type="helix" evidence="4">
    <location>
        <begin position="50"/>
        <end position="55"/>
    </location>
</feature>
<feature type="strand" evidence="4">
    <location>
        <begin position="62"/>
        <end position="67"/>
    </location>
</feature>
<feature type="strand" evidence="5">
    <location>
        <begin position="70"/>
        <end position="72"/>
    </location>
</feature>
<feature type="helix" evidence="4">
    <location>
        <begin position="74"/>
        <end position="89"/>
    </location>
</feature>
<feature type="strand" evidence="4">
    <location>
        <begin position="92"/>
        <end position="97"/>
    </location>
</feature>
<feature type="helix" evidence="4">
    <location>
        <begin position="101"/>
        <end position="111"/>
    </location>
</feature>
<feature type="turn" evidence="5">
    <location>
        <begin position="114"/>
        <end position="116"/>
    </location>
</feature>
<feature type="strand" evidence="4">
    <location>
        <begin position="120"/>
        <end position="122"/>
    </location>
</feature>
<feature type="helix" evidence="4">
    <location>
        <begin position="129"/>
        <end position="135"/>
    </location>
</feature>
<feature type="strand" evidence="4">
    <location>
        <begin position="138"/>
        <end position="140"/>
    </location>
</feature>
<feature type="strand" evidence="4">
    <location>
        <begin position="142"/>
        <end position="146"/>
    </location>
</feature>
<feature type="strand" evidence="4">
    <location>
        <begin position="156"/>
        <end position="159"/>
    </location>
</feature>
<feature type="helix" evidence="4">
    <location>
        <begin position="161"/>
        <end position="173"/>
    </location>
</feature>
<feature type="turn" evidence="4">
    <location>
        <begin position="174"/>
        <end position="176"/>
    </location>
</feature>
<feature type="strand" evidence="4">
    <location>
        <begin position="180"/>
        <end position="185"/>
    </location>
</feature>
<feature type="strand" evidence="3">
    <location>
        <begin position="187"/>
        <end position="189"/>
    </location>
</feature>
<feature type="helix" evidence="4">
    <location>
        <begin position="190"/>
        <end position="193"/>
    </location>
</feature>
<feature type="helix" evidence="4">
    <location>
        <begin position="196"/>
        <end position="205"/>
    </location>
</feature>
<feature type="turn" evidence="4">
    <location>
        <begin position="206"/>
        <end position="208"/>
    </location>
</feature>
<feature type="helix" evidence="4">
    <location>
        <begin position="213"/>
        <end position="215"/>
    </location>
</feature>
<feature type="strand" evidence="4">
    <location>
        <begin position="216"/>
        <end position="218"/>
    </location>
</feature>
<feature type="helix" evidence="4">
    <location>
        <begin position="223"/>
        <end position="235"/>
    </location>
</feature>
<feature type="strand" evidence="4">
    <location>
        <begin position="236"/>
        <end position="238"/>
    </location>
</feature>
<feature type="strand" evidence="4">
    <location>
        <begin position="241"/>
        <end position="247"/>
    </location>
</feature>
<feature type="helix" evidence="4">
    <location>
        <begin position="248"/>
        <end position="260"/>
    </location>
</feature>
<feature type="helix" evidence="4">
    <location>
        <begin position="265"/>
        <end position="268"/>
    </location>
</feature>
<feature type="strand" evidence="4">
    <location>
        <begin position="270"/>
        <end position="275"/>
    </location>
</feature>
<feature type="helix" evidence="4">
    <location>
        <begin position="278"/>
        <end position="281"/>
    </location>
</feature>
<feature type="strand" evidence="4">
    <location>
        <begin position="282"/>
        <end position="285"/>
    </location>
</feature>
<feature type="strand" evidence="4">
    <location>
        <begin position="288"/>
        <end position="291"/>
    </location>
</feature>
<feature type="helix" evidence="4">
    <location>
        <begin position="294"/>
        <end position="309"/>
    </location>
</feature>
<feature type="strand" evidence="4">
    <location>
        <begin position="319"/>
        <end position="321"/>
    </location>
</feature>
<feature type="strand" evidence="4">
    <location>
        <begin position="324"/>
        <end position="326"/>
    </location>
</feature>
<evidence type="ECO:0000250" key="1"/>
<evidence type="ECO:0000255" key="2">
    <source>
        <dbReference type="PROSITE-ProRule" id="PRU00111"/>
    </source>
</evidence>
<evidence type="ECO:0007829" key="3">
    <source>
        <dbReference type="PDB" id="1RZR"/>
    </source>
</evidence>
<evidence type="ECO:0007829" key="4">
    <source>
        <dbReference type="PDB" id="2HSG"/>
    </source>
</evidence>
<evidence type="ECO:0007829" key="5">
    <source>
        <dbReference type="PDB" id="2JCG"/>
    </source>
</evidence>
<proteinExistence type="evidence at protein level"/>
<protein>
    <recommendedName>
        <fullName>Catabolite control protein A</fullName>
    </recommendedName>
    <alternativeName>
        <fullName>Catabolite control protein</fullName>
    </alternativeName>
    <alternativeName>
        <fullName>Glucose-resistance amylase regulator</fullName>
    </alternativeName>
</protein>
<organism>
    <name type="scientific">Priestia megaterium</name>
    <name type="common">Bacillus megaterium</name>
    <dbReference type="NCBI Taxonomy" id="1404"/>
    <lineage>
        <taxon>Bacteria</taxon>
        <taxon>Bacillati</taxon>
        <taxon>Bacillota</taxon>
        <taxon>Bacilli</taxon>
        <taxon>Bacillales</taxon>
        <taxon>Bacillaceae</taxon>
        <taxon>Priestia</taxon>
    </lineage>
</organism>
<gene>
    <name type="primary">ccpA</name>
</gene>
<dbReference type="EMBL" id="L26052">
    <property type="protein sequence ID" value="AAA22295.1"/>
    <property type="molecule type" value="Genomic_DNA"/>
</dbReference>
<dbReference type="PIR" id="I39800">
    <property type="entry name" value="I39800"/>
</dbReference>
<dbReference type="RefSeq" id="WP_013085229.1">
    <property type="nucleotide sequence ID" value="NZ_JARMWE010000023.1"/>
</dbReference>
<dbReference type="PDB" id="1RZR">
    <property type="method" value="X-ray"/>
    <property type="resolution" value="2.80 A"/>
    <property type="chains" value="A/C/D/G=1-332"/>
</dbReference>
<dbReference type="PDB" id="1SXG">
    <property type="method" value="X-ray"/>
    <property type="resolution" value="2.75 A"/>
    <property type="chains" value="A/B/D/F/I/P=53-332"/>
</dbReference>
<dbReference type="PDB" id="1SXH">
    <property type="method" value="X-ray"/>
    <property type="resolution" value="2.75 A"/>
    <property type="chains" value="A/D=53-332"/>
</dbReference>
<dbReference type="PDB" id="1SXI">
    <property type="method" value="X-ray"/>
    <property type="resolution" value="3.00 A"/>
    <property type="chains" value="A/B/D/G/I/K/L/M/N/R/T/W=53-332"/>
</dbReference>
<dbReference type="PDB" id="2HSG">
    <property type="method" value="X-ray"/>
    <property type="resolution" value="2.50 A"/>
    <property type="chains" value="A=1-332"/>
</dbReference>
<dbReference type="PDB" id="2JCG">
    <property type="method" value="X-ray"/>
    <property type="resolution" value="2.60 A"/>
    <property type="chains" value="A=1-332"/>
</dbReference>
<dbReference type="PDB" id="2NZU">
    <property type="method" value="X-ray"/>
    <property type="resolution" value="2.50 A"/>
    <property type="chains" value="G=53-332"/>
</dbReference>
<dbReference type="PDB" id="2NZV">
    <property type="method" value="X-ray"/>
    <property type="resolution" value="3.00 A"/>
    <property type="chains" value="G=53-332"/>
</dbReference>
<dbReference type="PDB" id="2OEN">
    <property type="method" value="X-ray"/>
    <property type="resolution" value="3.17 A"/>
    <property type="chains" value="G=53-332"/>
</dbReference>
<dbReference type="PDBsum" id="1RZR"/>
<dbReference type="PDBsum" id="1SXG"/>
<dbReference type="PDBsum" id="1SXH"/>
<dbReference type="PDBsum" id="1SXI"/>
<dbReference type="PDBsum" id="2HSG"/>
<dbReference type="PDBsum" id="2JCG"/>
<dbReference type="PDBsum" id="2NZU"/>
<dbReference type="PDBsum" id="2NZV"/>
<dbReference type="PDBsum" id="2OEN"/>
<dbReference type="SMR" id="P46828"/>
<dbReference type="DrugBank" id="DB02283">
    <property type="generic name" value="2-Phenylamino-Ethanesulfonic Acid"/>
</dbReference>
<dbReference type="EvolutionaryTrace" id="P46828"/>
<dbReference type="PRO" id="PR:P46828"/>
<dbReference type="GO" id="GO:0003700">
    <property type="term" value="F:DNA-binding transcription factor activity"/>
    <property type="evidence" value="ECO:0007669"/>
    <property type="project" value="TreeGrafter"/>
</dbReference>
<dbReference type="GO" id="GO:0000976">
    <property type="term" value="F:transcription cis-regulatory region binding"/>
    <property type="evidence" value="ECO:0007669"/>
    <property type="project" value="TreeGrafter"/>
</dbReference>
<dbReference type="CDD" id="cd01392">
    <property type="entry name" value="HTH_LacI"/>
    <property type="match status" value="1"/>
</dbReference>
<dbReference type="CDD" id="cd06298">
    <property type="entry name" value="PBP1_CcpA"/>
    <property type="match status" value="1"/>
</dbReference>
<dbReference type="FunFam" id="3.40.50.2300:FF:000012">
    <property type="entry name" value="Catabolite control protein A"/>
    <property type="match status" value="1"/>
</dbReference>
<dbReference type="FunFam" id="1.10.260.40:FF:000002">
    <property type="entry name" value="HTH-type transcriptional repressor PurR"/>
    <property type="match status" value="1"/>
</dbReference>
<dbReference type="Gene3D" id="3.40.50.2300">
    <property type="match status" value="2"/>
</dbReference>
<dbReference type="Gene3D" id="1.10.260.40">
    <property type="entry name" value="lambda repressor-like DNA-binding domains"/>
    <property type="match status" value="1"/>
</dbReference>
<dbReference type="InterPro" id="IPR006377">
    <property type="entry name" value="CcpA"/>
</dbReference>
<dbReference type="InterPro" id="IPR000843">
    <property type="entry name" value="HTH_LacI"/>
</dbReference>
<dbReference type="InterPro" id="IPR046335">
    <property type="entry name" value="LacI/GalR-like_sensor"/>
</dbReference>
<dbReference type="InterPro" id="IPR010982">
    <property type="entry name" value="Lambda_DNA-bd_dom_sf"/>
</dbReference>
<dbReference type="InterPro" id="IPR028082">
    <property type="entry name" value="Peripla_BP_I"/>
</dbReference>
<dbReference type="NCBIfam" id="TIGR01481">
    <property type="entry name" value="ccpA"/>
    <property type="match status" value="1"/>
</dbReference>
<dbReference type="PANTHER" id="PTHR30146:SF150">
    <property type="entry name" value="ARABINOSE METABOLISM TRANSCRIPTIONAL REPRESSOR"/>
    <property type="match status" value="1"/>
</dbReference>
<dbReference type="PANTHER" id="PTHR30146">
    <property type="entry name" value="LACI-RELATED TRANSCRIPTIONAL REPRESSOR"/>
    <property type="match status" value="1"/>
</dbReference>
<dbReference type="Pfam" id="PF00356">
    <property type="entry name" value="LacI"/>
    <property type="match status" value="1"/>
</dbReference>
<dbReference type="Pfam" id="PF13377">
    <property type="entry name" value="Peripla_BP_3"/>
    <property type="match status" value="1"/>
</dbReference>
<dbReference type="PRINTS" id="PR00036">
    <property type="entry name" value="HTHLACI"/>
</dbReference>
<dbReference type="SMART" id="SM00354">
    <property type="entry name" value="HTH_LACI"/>
    <property type="match status" value="1"/>
</dbReference>
<dbReference type="SUPFAM" id="SSF47413">
    <property type="entry name" value="lambda repressor-like DNA-binding domains"/>
    <property type="match status" value="1"/>
</dbReference>
<dbReference type="SUPFAM" id="SSF53822">
    <property type="entry name" value="Periplasmic binding protein-like I"/>
    <property type="match status" value="1"/>
</dbReference>
<dbReference type="PROSITE" id="PS00356">
    <property type="entry name" value="HTH_LACI_1"/>
    <property type="match status" value="1"/>
</dbReference>
<dbReference type="PROSITE" id="PS50932">
    <property type="entry name" value="HTH_LACI_2"/>
    <property type="match status" value="1"/>
</dbReference>
<reference key="1">
    <citation type="journal article" date="1994" name="Gene">
        <title>Sequences of ccpA and two downstream Bacillus megaterium genes with homology to the motAB operon from Bacillus subtilis.</title>
        <authorList>
            <person name="Hueck C."/>
            <person name="Kraus A."/>
            <person name="Hillen W."/>
        </authorList>
    </citation>
    <scope>NUCLEOTIDE SEQUENCE [GENOMIC DNA]</scope>
</reference>
<accession>P46828</accession>
<comment type="function">
    <text evidence="1">Global transcriptional regulator of carbon catabolite repression (CCR) and carbon catabolite activation (CCA), which ensures optimal energy usage under diverse conditions.</text>
</comment>
<keyword id="KW-0002">3D-structure</keyword>
<keyword id="KW-0010">Activator</keyword>
<keyword id="KW-0238">DNA-binding</keyword>
<keyword id="KW-0678">Repressor</keyword>
<keyword id="KW-0804">Transcription</keyword>
<keyword id="KW-0805">Transcription regulation</keyword>
<name>CCPA_PRIMG</name>